<evidence type="ECO:0000250" key="1">
    <source>
        <dbReference type="UniProtKB" id="Q654D9"/>
    </source>
</evidence>
<evidence type="ECO:0000255" key="2"/>
<evidence type="ECO:0000256" key="3">
    <source>
        <dbReference type="SAM" id="MobiDB-lite"/>
    </source>
</evidence>
<evidence type="ECO:0000305" key="4"/>
<evidence type="ECO:0000312" key="5">
    <source>
        <dbReference type="EMBL" id="CAH67341.1"/>
    </source>
</evidence>
<dbReference type="EMBL" id="CR855193">
    <property type="protein sequence ID" value="CAH67341.1"/>
    <property type="molecule type" value="Genomic_DNA"/>
</dbReference>
<dbReference type="SMR" id="Q01IU9"/>
<dbReference type="EnsemblPlants" id="OsIR64_04g0017290.01">
    <property type="protein sequence ID" value="OsIR64_04g0017290.01"/>
    <property type="gene ID" value="OsIR64_04g0017290"/>
</dbReference>
<dbReference type="EnsemblPlants" id="OsKYG_04g0017630.01">
    <property type="protein sequence ID" value="OsKYG_04g0017630.01"/>
    <property type="gene ID" value="OsKYG_04g0017630"/>
</dbReference>
<dbReference type="EnsemblPlants" id="OsLaMu_04g0018290.01">
    <property type="protein sequence ID" value="OsLaMu_04g0018290.01"/>
    <property type="gene ID" value="OsLaMu_04g0018290"/>
</dbReference>
<dbReference type="EnsemblPlants" id="OsLima_04g0017790.01">
    <property type="protein sequence ID" value="OsLima_04g0017790.01"/>
    <property type="gene ID" value="OsLima_04g0017790"/>
</dbReference>
<dbReference type="EnsemblPlants" id="OsLiXu_04g0018130.01">
    <property type="protein sequence ID" value="OsLiXu_04g0018130.01"/>
    <property type="gene ID" value="OsLiXu_04g0018130"/>
</dbReference>
<dbReference type="EnsemblPlants" id="OsMH63_04G018570_01">
    <property type="protein sequence ID" value="OsMH63_04G018570_01"/>
    <property type="gene ID" value="OsMH63_04G018570"/>
</dbReference>
<dbReference type="EnsemblPlants" id="OsPr106_04g0018500.01">
    <property type="protein sequence ID" value="OsPr106_04g0018500.01"/>
    <property type="gene ID" value="OsPr106_04g0018500"/>
</dbReference>
<dbReference type="EnsemblPlants" id="OsZS97_04G018580_01">
    <property type="protein sequence ID" value="OsZS97_04G018580_01"/>
    <property type="gene ID" value="OsZS97_04G018580"/>
</dbReference>
<dbReference type="Gramene" id="OsIR64_04g0017290.01">
    <property type="protein sequence ID" value="OsIR64_04g0017290.01"/>
    <property type="gene ID" value="OsIR64_04g0017290"/>
</dbReference>
<dbReference type="Gramene" id="OsKYG_04g0017630.01">
    <property type="protein sequence ID" value="OsKYG_04g0017630.01"/>
    <property type="gene ID" value="OsKYG_04g0017630"/>
</dbReference>
<dbReference type="Gramene" id="OsLaMu_04g0018290.01">
    <property type="protein sequence ID" value="OsLaMu_04g0018290.01"/>
    <property type="gene ID" value="OsLaMu_04g0018290"/>
</dbReference>
<dbReference type="Gramene" id="OsLima_04g0017790.01">
    <property type="protein sequence ID" value="OsLima_04g0017790.01"/>
    <property type="gene ID" value="OsLima_04g0017790"/>
</dbReference>
<dbReference type="Gramene" id="OsLiXu_04g0018130.01">
    <property type="protein sequence ID" value="OsLiXu_04g0018130.01"/>
    <property type="gene ID" value="OsLiXu_04g0018130"/>
</dbReference>
<dbReference type="Gramene" id="OsMH63_04G018570_01">
    <property type="protein sequence ID" value="OsMH63_04G018570_01"/>
    <property type="gene ID" value="OsMH63_04G018570"/>
</dbReference>
<dbReference type="Gramene" id="OsPr106_04g0018500.01">
    <property type="protein sequence ID" value="OsPr106_04g0018500.01"/>
    <property type="gene ID" value="OsPr106_04g0018500"/>
</dbReference>
<dbReference type="Gramene" id="OsZS97_04G018580_01">
    <property type="protein sequence ID" value="OsZS97_04G018580_01"/>
    <property type="gene ID" value="OsZS97_04G018580"/>
</dbReference>
<dbReference type="GO" id="GO:0000139">
    <property type="term" value="C:Golgi membrane"/>
    <property type="evidence" value="ECO:0007669"/>
    <property type="project" value="UniProtKB-SubCell"/>
</dbReference>
<dbReference type="GO" id="GO:0015165">
    <property type="term" value="F:pyrimidine nucleotide-sugar transmembrane transporter activity"/>
    <property type="evidence" value="ECO:0007669"/>
    <property type="project" value="InterPro"/>
</dbReference>
<dbReference type="InterPro" id="IPR007271">
    <property type="entry name" value="Nuc_sug_transpt"/>
</dbReference>
<dbReference type="PANTHER" id="PTHR10231">
    <property type="entry name" value="NUCLEOTIDE-SUGAR TRANSMEMBRANE TRANSPORTER"/>
    <property type="match status" value="1"/>
</dbReference>
<dbReference type="Pfam" id="PF04142">
    <property type="entry name" value="Nuc_sug_transp"/>
    <property type="match status" value="1"/>
</dbReference>
<dbReference type="PIRSF" id="PIRSF005799">
    <property type="entry name" value="UDP-gal_transpt"/>
    <property type="match status" value="1"/>
</dbReference>
<dbReference type="SUPFAM" id="SSF103481">
    <property type="entry name" value="Multidrug resistance efflux transporter EmrE"/>
    <property type="match status" value="1"/>
</dbReference>
<protein>
    <recommendedName>
        <fullName evidence="4">CMP-sialic acid transporter 4</fullName>
        <shortName evidence="4">CMP-SA-Tr 4</shortName>
        <shortName evidence="4">CMP-Sia-Tr 4</shortName>
    </recommendedName>
    <alternativeName>
        <fullName evidence="4">CMP-sialic acid transporter-like protein 4</fullName>
    </alternativeName>
</protein>
<accession>Q01IU9</accession>
<reference key="1">
    <citation type="journal article" date="2002" name="Nature">
        <title>Sequence and analysis of rice chromosome 4.</title>
        <authorList>
            <person name="Feng Q."/>
            <person name="Zhang Y."/>
            <person name="Hao P."/>
            <person name="Wang S."/>
            <person name="Fu G."/>
            <person name="Huang Y."/>
            <person name="Li Y."/>
            <person name="Zhu J."/>
            <person name="Liu Y."/>
            <person name="Hu X."/>
            <person name="Jia P."/>
            <person name="Zhang Y."/>
            <person name="Zhao Q."/>
            <person name="Ying K."/>
            <person name="Yu S."/>
            <person name="Tang Y."/>
            <person name="Weng Q."/>
            <person name="Zhang L."/>
            <person name="Lu Y."/>
            <person name="Mu J."/>
            <person name="Lu Y."/>
            <person name="Zhang L.S."/>
            <person name="Yu Z."/>
            <person name="Fan D."/>
            <person name="Liu X."/>
            <person name="Lu T."/>
            <person name="Li C."/>
            <person name="Wu Y."/>
            <person name="Sun T."/>
            <person name="Lei H."/>
            <person name="Li T."/>
            <person name="Hu H."/>
            <person name="Guan J."/>
            <person name="Wu M."/>
            <person name="Zhang R."/>
            <person name="Zhou B."/>
            <person name="Chen Z."/>
            <person name="Chen L."/>
            <person name="Jin Z."/>
            <person name="Wang R."/>
            <person name="Yin H."/>
            <person name="Cai Z."/>
            <person name="Ren S."/>
            <person name="Lv G."/>
            <person name="Gu W."/>
            <person name="Zhu G."/>
            <person name="Tu Y."/>
            <person name="Jia J."/>
            <person name="Zhang Y."/>
            <person name="Chen J."/>
            <person name="Kang H."/>
            <person name="Chen X."/>
            <person name="Shao C."/>
            <person name="Sun Y."/>
            <person name="Hu Q."/>
            <person name="Zhang X."/>
            <person name="Zhang W."/>
            <person name="Wang L."/>
            <person name="Ding C."/>
            <person name="Sheng H."/>
            <person name="Gu J."/>
            <person name="Chen S."/>
            <person name="Ni L."/>
            <person name="Zhu F."/>
            <person name="Chen W."/>
            <person name="Lan L."/>
            <person name="Lai Y."/>
            <person name="Cheng Z."/>
            <person name="Gu M."/>
            <person name="Jiang J."/>
            <person name="Li J."/>
            <person name="Hong G."/>
            <person name="Xue Y."/>
            <person name="Han B."/>
        </authorList>
    </citation>
    <scope>NUCLEOTIDE SEQUENCE [LARGE SCALE GENOMIC DNA]</scope>
    <source>
        <strain>cv. Guang-Lu-Ai No.4</strain>
    </source>
</reference>
<organism>
    <name type="scientific">Oryza sativa subsp. indica</name>
    <name type="common">Rice</name>
    <dbReference type="NCBI Taxonomy" id="39946"/>
    <lineage>
        <taxon>Eukaryota</taxon>
        <taxon>Viridiplantae</taxon>
        <taxon>Streptophyta</taxon>
        <taxon>Embryophyta</taxon>
        <taxon>Tracheophyta</taxon>
        <taxon>Spermatophyta</taxon>
        <taxon>Magnoliopsida</taxon>
        <taxon>Liliopsida</taxon>
        <taxon>Poales</taxon>
        <taxon>Poaceae</taxon>
        <taxon>BOP clade</taxon>
        <taxon>Oryzoideae</taxon>
        <taxon>Oryzeae</taxon>
        <taxon>Oryzinae</taxon>
        <taxon>Oryza</taxon>
        <taxon>Oryza sativa</taxon>
    </lineage>
</organism>
<sequence>MQRNGVMECSVCHSKVVAPSPRSVSRAYDKHRSKISSKYRALNFLLVSGDCILVGLQPILVFMSKVDGKFQFSPISVNFLTEVTKVIFAIVMLIIQSRKQKVGEKPLLSLSTFVQAARNNALLAVPALLYAINNYLKFIMQLYFSPATVKMLSNLKVLVIAILLKFIMRRKFSIIQWEALALLLIGISVNQLSSIPDGTKSFGLAVTTIAYIYTLIFVTVPSLASVYNEYALKSQFDTSIYLQNLFLYGYGAIFNFLGILGTVIFQGPESFDILQGHSRATMFLICNNAAQGILSSFFFKYADTILKKYSSTVATIFTGLASAAFLGHTLTVNFLLGISIVFISMHQFFSPLAKVKDDKPAGALEPEDAQNHRSSDSSFVNMTAGAADDASHLTSTDERKPLLPI</sequence>
<gene>
    <name evidence="4" type="primary">CSTLP4</name>
    <name evidence="5" type="ORF">OSIGBa0130B08.1</name>
</gene>
<keyword id="KW-0333">Golgi apparatus</keyword>
<keyword id="KW-0472">Membrane</keyword>
<keyword id="KW-0762">Sugar transport</keyword>
<keyword id="KW-0812">Transmembrane</keyword>
<keyword id="KW-1133">Transmembrane helix</keyword>
<keyword id="KW-0813">Transport</keyword>
<feature type="chain" id="PRO_0000434344" description="CMP-sialic acid transporter 4">
    <location>
        <begin position="1"/>
        <end position="405"/>
    </location>
</feature>
<feature type="topological domain" description="Cytoplasmic" evidence="4">
    <location>
        <begin position="1"/>
        <end position="43"/>
    </location>
</feature>
<feature type="transmembrane region" description="Helical" evidence="2">
    <location>
        <begin position="44"/>
        <end position="64"/>
    </location>
</feature>
<feature type="topological domain" description="Lumenal" evidence="4">
    <location>
        <begin position="65"/>
        <end position="74"/>
    </location>
</feature>
<feature type="transmembrane region" description="Helical" evidence="2">
    <location>
        <begin position="75"/>
        <end position="95"/>
    </location>
</feature>
<feature type="topological domain" description="Cytoplasmic" evidence="4">
    <location>
        <begin position="96"/>
        <end position="121"/>
    </location>
</feature>
<feature type="transmembrane region" description="Helical" evidence="2">
    <location>
        <begin position="122"/>
        <end position="142"/>
    </location>
</feature>
<feature type="topological domain" description="Lumenal" evidence="4">
    <location>
        <position position="143"/>
    </location>
</feature>
<feature type="transmembrane region" description="Helical" evidence="2">
    <location>
        <begin position="144"/>
        <end position="164"/>
    </location>
</feature>
<feature type="topological domain" description="Cytoplasmic" evidence="4">
    <location>
        <begin position="165"/>
        <end position="171"/>
    </location>
</feature>
<feature type="transmembrane region" description="Helical" evidence="2">
    <location>
        <begin position="172"/>
        <end position="192"/>
    </location>
</feature>
<feature type="topological domain" description="Lumenal" evidence="4">
    <location>
        <begin position="193"/>
        <end position="203"/>
    </location>
</feature>
<feature type="transmembrane region" description="Helical" evidence="2">
    <location>
        <begin position="204"/>
        <end position="224"/>
    </location>
</feature>
<feature type="topological domain" description="Cytoplasmic" evidence="4">
    <location>
        <begin position="225"/>
        <end position="244"/>
    </location>
</feature>
<feature type="transmembrane region" description="Helical" evidence="2">
    <location>
        <begin position="245"/>
        <end position="265"/>
    </location>
</feature>
<feature type="topological domain" description="Lumenal" evidence="4">
    <location>
        <begin position="266"/>
        <end position="281"/>
    </location>
</feature>
<feature type="transmembrane region" description="Helical" evidence="2">
    <location>
        <begin position="282"/>
        <end position="302"/>
    </location>
</feature>
<feature type="topological domain" description="Cytoplasmic" evidence="4">
    <location>
        <begin position="303"/>
        <end position="322"/>
    </location>
</feature>
<feature type="transmembrane region" description="Helical" evidence="2">
    <location>
        <begin position="323"/>
        <end position="343"/>
    </location>
</feature>
<feature type="topological domain" description="Lumenal" evidence="4">
    <location>
        <begin position="344"/>
        <end position="405"/>
    </location>
</feature>
<feature type="region of interest" description="Disordered" evidence="3">
    <location>
        <begin position="386"/>
        <end position="405"/>
    </location>
</feature>
<feature type="compositionally biased region" description="Basic and acidic residues" evidence="3">
    <location>
        <begin position="389"/>
        <end position="405"/>
    </location>
</feature>
<name>CSTR4_ORYSI</name>
<proteinExistence type="inferred from homology"/>
<comment type="function">
    <text evidence="1">Sugar transporter involved in the transport of CMP-sialic acid from the cytoplasm into the Golgi. May transport important nucleotide sugars such as CMP-Kdo (2-keto-3-deoxy-D-manno-octulosonic acid) in physiological conditions.</text>
</comment>
<comment type="subcellular location">
    <subcellularLocation>
        <location evidence="4">Golgi apparatus membrane</location>
        <topology evidence="4">Multi-pass membrane protein</topology>
    </subcellularLocation>
</comment>
<comment type="similarity">
    <text evidence="4">Belongs to the nucleotide-sugar transporter family. CMP-Sialate:CMP antiporter (TC 2.A.7.12) subfamily.</text>
</comment>